<protein>
    <recommendedName>
        <fullName>Lymphocyte antigen 96</fullName>
        <shortName>Ly-96</shortName>
    </recommendedName>
    <alternativeName>
        <fullName>Protein MD-2</fullName>
    </alternativeName>
</protein>
<accession>P58755</accession>
<comment type="function">
    <text evidence="1 3">Binds bacterial lipopolysaccharide (LPS). Cooperates with TLR4 in the innate immune response to bacterial lipopolysaccharide (LPS), and with TLR2 in the response to cell wall components from Gram-positive and Gram-negative bacteria. Enhances TLR4-dependent activation of NF-kappa-B. Cells expressing both LY96 and TLR4, but not TLR4 alone, respond to LPS.</text>
</comment>
<comment type="subunit">
    <text evidence="1">Heterogeneous homomer formed from homodimers; disulfide-linked. Belongs to the lipopolysaccharide (LPS) receptor, a multi-protein complex containing at least CD14, LY96 and TLR4. Binds to the extracellular domains of TLR2 and TLR4. Ligand binding induces interaction with TLR4 and oligomerization of the complex.</text>
</comment>
<comment type="subcellular location">
    <subcellularLocation>
        <location evidence="1">Secreted</location>
        <location evidence="1">Extracellular space</location>
    </subcellularLocation>
    <subcellularLocation>
        <location evidence="1">Secreted</location>
    </subcellularLocation>
    <text evidence="1">Retained in the extracellular space at the cell surface by interaction with TLR4.</text>
</comment>
<comment type="PTM">
    <text evidence="1">N-glycosylated.</text>
</comment>
<organism>
    <name type="scientific">Cricetulus griseus</name>
    <name type="common">Chinese hamster</name>
    <name type="synonym">Cricetulus barabensis griseus</name>
    <dbReference type="NCBI Taxonomy" id="10029"/>
    <lineage>
        <taxon>Eukaryota</taxon>
        <taxon>Metazoa</taxon>
        <taxon>Chordata</taxon>
        <taxon>Craniata</taxon>
        <taxon>Vertebrata</taxon>
        <taxon>Euteleostomi</taxon>
        <taxon>Mammalia</taxon>
        <taxon>Eutheria</taxon>
        <taxon>Euarchontoglires</taxon>
        <taxon>Glires</taxon>
        <taxon>Rodentia</taxon>
        <taxon>Myomorpha</taxon>
        <taxon>Muroidea</taxon>
        <taxon>Cricetidae</taxon>
        <taxon>Cricetinae</taxon>
        <taxon>Cricetulus</taxon>
    </lineage>
</organism>
<name>LY96_CRIGR</name>
<keyword id="KW-1015">Disulfide bond</keyword>
<keyword id="KW-0325">Glycoprotein</keyword>
<keyword id="KW-0391">Immunity</keyword>
<keyword id="KW-0395">Inflammatory response</keyword>
<keyword id="KW-0399">Innate immunity</keyword>
<keyword id="KW-0964">Secreted</keyword>
<keyword id="KW-0732">Signal</keyword>
<proteinExistence type="evidence at transcript level"/>
<feature type="signal peptide" evidence="2">
    <location>
        <begin position="1"/>
        <end position="16"/>
    </location>
</feature>
<feature type="chain" id="PRO_0000018618" description="Lymphocyte antigen 96">
    <location>
        <begin position="17"/>
        <end position="160"/>
    </location>
</feature>
<feature type="region of interest" description="Interaction with lipopolysaccharide" evidence="1">
    <location>
        <begin position="119"/>
        <end position="123"/>
    </location>
</feature>
<feature type="glycosylation site" description="N-linked (GlcNAc...) asparagine" evidence="2">
    <location>
        <position position="26"/>
    </location>
</feature>
<feature type="glycosylation site" description="N-linked (GlcNAc...) asparagine" evidence="2">
    <location>
        <position position="77"/>
    </location>
</feature>
<feature type="glycosylation site" description="N-linked (GlcNAc...) asparagine" evidence="2">
    <location>
        <position position="101"/>
    </location>
</feature>
<feature type="glycosylation site" description="N-linked (GlcNAc...) asparagine" evidence="2">
    <location>
        <position position="150"/>
    </location>
</feature>
<feature type="disulfide bond" evidence="1">
    <location>
        <begin position="25"/>
        <end position="51"/>
    </location>
</feature>
<feature type="disulfide bond" evidence="1">
    <location>
        <begin position="37"/>
        <end position="148"/>
    </location>
</feature>
<feature type="disulfide bond" evidence="1">
    <location>
        <begin position="95"/>
        <end position="105"/>
    </location>
</feature>
<feature type="sequence variant" description="In endotoxin nonresponder." evidence="3">
    <original>C</original>
    <variation>Y</variation>
    <location>
        <position position="95"/>
    </location>
</feature>
<evidence type="ECO:0000250" key="1">
    <source>
        <dbReference type="UniProtKB" id="Q9Y6Y9"/>
    </source>
</evidence>
<evidence type="ECO:0000255" key="2"/>
<evidence type="ECO:0000269" key="3">
    <source>
    </source>
</evidence>
<reference key="1">
    <citation type="journal article" date="2001" name="J. Exp. Med.">
        <title>Molecular genetic analysis of an endotoxin nonresponder mutant cell line. A point mutation in a conserved region of MD-2 abolishes endotoxin-induced signaling.</title>
        <authorList>
            <person name="Schromm A.B."/>
            <person name="Lien E."/>
            <person name="Henneke P."/>
            <person name="Chow J.C."/>
            <person name="Yoshimura A."/>
            <person name="Heine H."/>
            <person name="Latz E."/>
            <person name="Monks B.G."/>
            <person name="Schwartz D.A."/>
            <person name="Miyake K."/>
            <person name="Golenbock D.T."/>
        </authorList>
    </citation>
    <scope>NUCLEOTIDE SEQUENCE [MRNA]</scope>
    <scope>FUNCTION</scope>
    <scope>VARIANT TYR-95</scope>
    <source>
        <tissue>Ovarian carcinoma</tissue>
    </source>
</reference>
<sequence>MLPFILFSTLLPLIFTESEQQLWFCNSSDATFSYSYCDSMKFPFSITAEPCITLKGTNGFLHIKFIPRRDLKKLYFNLSINVNSIEVPTRKEIICHGYDDNYSFCKALKGETVNTVVPFSFKGILFPKGQYRCVAEAIVGDNEEKLFCLNFTIIHHPNVN</sequence>
<dbReference type="EMBL" id="AF325501">
    <property type="protein sequence ID" value="AAK57984.1"/>
    <property type="molecule type" value="mRNA"/>
</dbReference>
<dbReference type="RefSeq" id="NP_001233702.1">
    <property type="nucleotide sequence ID" value="NM_001246773.1"/>
</dbReference>
<dbReference type="SMR" id="P58755"/>
<dbReference type="GlyCosmos" id="P58755">
    <property type="glycosylation" value="4 sites, No reported glycans"/>
</dbReference>
<dbReference type="PaxDb" id="10029-NP_001233702.1"/>
<dbReference type="GeneID" id="100689342"/>
<dbReference type="KEGG" id="cge:100689342"/>
<dbReference type="CTD" id="23643"/>
<dbReference type="eggNOG" id="ENOG502SD7W">
    <property type="taxonomic scope" value="Eukaryota"/>
</dbReference>
<dbReference type="OMA" id="HWKEVLC"/>
<dbReference type="OrthoDB" id="9907947at2759"/>
<dbReference type="Proteomes" id="UP000694386">
    <property type="component" value="Unplaced"/>
</dbReference>
<dbReference type="Proteomes" id="UP001108280">
    <property type="component" value="Chromosome 2"/>
</dbReference>
<dbReference type="GO" id="GO:0005576">
    <property type="term" value="C:extracellular region"/>
    <property type="evidence" value="ECO:0007669"/>
    <property type="project" value="UniProtKB-SubCell"/>
</dbReference>
<dbReference type="GO" id="GO:0046696">
    <property type="term" value="C:lipopolysaccharide receptor complex"/>
    <property type="evidence" value="ECO:0000250"/>
    <property type="project" value="UniProtKB"/>
</dbReference>
<dbReference type="GO" id="GO:0005886">
    <property type="term" value="C:plasma membrane"/>
    <property type="evidence" value="ECO:0000250"/>
    <property type="project" value="UniProtKB"/>
</dbReference>
<dbReference type="GO" id="GO:0001530">
    <property type="term" value="F:lipopolysaccharide binding"/>
    <property type="evidence" value="ECO:0007669"/>
    <property type="project" value="InterPro"/>
</dbReference>
<dbReference type="GO" id="GO:0001875">
    <property type="term" value="F:lipopolysaccharide immune receptor activity"/>
    <property type="evidence" value="ECO:0000250"/>
    <property type="project" value="UniProtKB"/>
</dbReference>
<dbReference type="GO" id="GO:0035662">
    <property type="term" value="F:Toll-like receptor 4 binding"/>
    <property type="evidence" value="ECO:0007669"/>
    <property type="project" value="InterPro"/>
</dbReference>
<dbReference type="GO" id="GO:0071222">
    <property type="term" value="P:cellular response to lipopolysaccharide"/>
    <property type="evidence" value="ECO:0000250"/>
    <property type="project" value="UniProtKB"/>
</dbReference>
<dbReference type="GO" id="GO:0032497">
    <property type="term" value="P:detection of lipopolysaccharide"/>
    <property type="evidence" value="ECO:0000250"/>
    <property type="project" value="UniProtKB"/>
</dbReference>
<dbReference type="GO" id="GO:0006954">
    <property type="term" value="P:inflammatory response"/>
    <property type="evidence" value="ECO:0007669"/>
    <property type="project" value="UniProtKB-KW"/>
</dbReference>
<dbReference type="GO" id="GO:0045087">
    <property type="term" value="P:innate immune response"/>
    <property type="evidence" value="ECO:0007669"/>
    <property type="project" value="UniProtKB-KW"/>
</dbReference>
<dbReference type="GO" id="GO:0031663">
    <property type="term" value="P:lipopolysaccharide-mediated signaling pathway"/>
    <property type="evidence" value="ECO:0000250"/>
    <property type="project" value="UniProtKB"/>
</dbReference>
<dbReference type="GO" id="GO:0031666">
    <property type="term" value="P:positive regulation of lipopolysaccharide-mediated signaling pathway"/>
    <property type="evidence" value="ECO:0007669"/>
    <property type="project" value="TreeGrafter"/>
</dbReference>
<dbReference type="GO" id="GO:0032760">
    <property type="term" value="P:positive regulation of tumor necrosis factor production"/>
    <property type="evidence" value="ECO:0000250"/>
    <property type="project" value="UniProtKB"/>
</dbReference>
<dbReference type="GO" id="GO:0034142">
    <property type="term" value="P:toll-like receptor 4 signaling pathway"/>
    <property type="evidence" value="ECO:0000250"/>
    <property type="project" value="UniProtKB"/>
</dbReference>
<dbReference type="FunFam" id="2.60.40.770:FF:000003">
    <property type="entry name" value="Lymphocyte antigen 96"/>
    <property type="match status" value="1"/>
</dbReference>
<dbReference type="Gene3D" id="2.60.40.770">
    <property type="match status" value="1"/>
</dbReference>
<dbReference type="InterPro" id="IPR014756">
    <property type="entry name" value="Ig_E-set"/>
</dbReference>
<dbReference type="InterPro" id="IPR039217">
    <property type="entry name" value="LY96"/>
</dbReference>
<dbReference type="InterPro" id="IPR003172">
    <property type="entry name" value="ML_dom"/>
</dbReference>
<dbReference type="PANTHER" id="PTHR15218:SF0">
    <property type="entry name" value="LYMPHOCYTE ANTIGEN 96"/>
    <property type="match status" value="1"/>
</dbReference>
<dbReference type="PANTHER" id="PTHR15218">
    <property type="entry name" value="MD-1, MD-2 - RELATED"/>
    <property type="match status" value="1"/>
</dbReference>
<dbReference type="Pfam" id="PF02221">
    <property type="entry name" value="E1_DerP2_DerF2"/>
    <property type="match status" value="1"/>
</dbReference>
<dbReference type="SMART" id="SM00737">
    <property type="entry name" value="ML"/>
    <property type="match status" value="1"/>
</dbReference>
<dbReference type="SUPFAM" id="SSF81296">
    <property type="entry name" value="E set domains"/>
    <property type="match status" value="1"/>
</dbReference>
<gene>
    <name type="primary">LY96</name>
    <name type="synonym">MD2</name>
</gene>